<keyword id="KW-0143">Chaperone</keyword>
<keyword id="KW-0963">Cytoplasm</keyword>
<keyword id="KW-0533">Nickel</keyword>
<keyword id="KW-0996">Nickel insertion</keyword>
<name>UREE_BURMS</name>
<comment type="function">
    <text evidence="1">Involved in urease metallocenter assembly. Binds nickel. Probably functions as a nickel donor during metallocenter assembly.</text>
</comment>
<comment type="subcellular location">
    <subcellularLocation>
        <location evidence="1">Cytoplasm</location>
    </subcellularLocation>
</comment>
<comment type="similarity">
    <text evidence="1">Belongs to the UreE family.</text>
</comment>
<reference key="1">
    <citation type="journal article" date="2010" name="Genome Biol. Evol.">
        <title>Continuing evolution of Burkholderia mallei through genome reduction and large-scale rearrangements.</title>
        <authorList>
            <person name="Losada L."/>
            <person name="Ronning C.M."/>
            <person name="DeShazer D."/>
            <person name="Woods D."/>
            <person name="Fedorova N."/>
            <person name="Kim H.S."/>
            <person name="Shabalina S.A."/>
            <person name="Pearson T.R."/>
            <person name="Brinkac L."/>
            <person name="Tan P."/>
            <person name="Nandi T."/>
            <person name="Crabtree J."/>
            <person name="Badger J."/>
            <person name="Beckstrom-Sternberg S."/>
            <person name="Saqib M."/>
            <person name="Schutzer S.E."/>
            <person name="Keim P."/>
            <person name="Nierman W.C."/>
        </authorList>
    </citation>
    <scope>NUCLEOTIDE SEQUENCE [LARGE SCALE GENOMIC DNA]</scope>
    <source>
        <strain>SAVP1</strain>
    </source>
</reference>
<gene>
    <name evidence="1" type="primary">ureE</name>
    <name type="ordered locus">BMASAVP1_A0722</name>
</gene>
<accession>A1V1G5</accession>
<sequence>MRTIDKRIAPNVRLAATLVARAPALTLAYDARCKSRLAATLDTGEDVALVLPRGTVLRDGDVLVADDGALVRVAAAHEAVLLVRAPDALTLTRAAYHLGNRHTPVEVGAGCLKLEYDPALADMLTRLGATVERASAPFQPEAGAYGGGHRHGHDATFAEDYALAQQVFDEHHGHSHSHSHSHSHDHDHQHGPSCSHGHHHGHR</sequence>
<dbReference type="EMBL" id="CP000526">
    <property type="protein sequence ID" value="ABM51998.1"/>
    <property type="molecule type" value="Genomic_DNA"/>
</dbReference>
<dbReference type="RefSeq" id="WP_011807647.1">
    <property type="nucleotide sequence ID" value="NC_008785.1"/>
</dbReference>
<dbReference type="SMR" id="A1V1G5"/>
<dbReference type="KEGG" id="bmv:BMASAVP1_A0722"/>
<dbReference type="HOGENOM" id="CLU_093757_0_0_4"/>
<dbReference type="GO" id="GO:0005737">
    <property type="term" value="C:cytoplasm"/>
    <property type="evidence" value="ECO:0007669"/>
    <property type="project" value="UniProtKB-SubCell"/>
</dbReference>
<dbReference type="GO" id="GO:0016151">
    <property type="term" value="F:nickel cation binding"/>
    <property type="evidence" value="ECO:0007669"/>
    <property type="project" value="UniProtKB-UniRule"/>
</dbReference>
<dbReference type="GO" id="GO:0051082">
    <property type="term" value="F:unfolded protein binding"/>
    <property type="evidence" value="ECO:0007669"/>
    <property type="project" value="UniProtKB-UniRule"/>
</dbReference>
<dbReference type="GO" id="GO:0006457">
    <property type="term" value="P:protein folding"/>
    <property type="evidence" value="ECO:0007669"/>
    <property type="project" value="InterPro"/>
</dbReference>
<dbReference type="GO" id="GO:0065003">
    <property type="term" value="P:protein-containing complex assembly"/>
    <property type="evidence" value="ECO:0007669"/>
    <property type="project" value="InterPro"/>
</dbReference>
<dbReference type="GO" id="GO:0019627">
    <property type="term" value="P:urea metabolic process"/>
    <property type="evidence" value="ECO:0007669"/>
    <property type="project" value="InterPro"/>
</dbReference>
<dbReference type="CDD" id="cd00571">
    <property type="entry name" value="UreE"/>
    <property type="match status" value="1"/>
</dbReference>
<dbReference type="Gene3D" id="2.60.260.20">
    <property type="entry name" value="Urease metallochaperone UreE, N-terminal domain"/>
    <property type="match status" value="1"/>
</dbReference>
<dbReference type="Gene3D" id="3.30.70.790">
    <property type="entry name" value="UreE, C-terminal domain"/>
    <property type="match status" value="1"/>
</dbReference>
<dbReference type="HAMAP" id="MF_00822">
    <property type="entry name" value="UreE"/>
    <property type="match status" value="1"/>
</dbReference>
<dbReference type="InterPro" id="IPR012406">
    <property type="entry name" value="UreE"/>
</dbReference>
<dbReference type="InterPro" id="IPR007864">
    <property type="entry name" value="UreE_C_dom"/>
</dbReference>
<dbReference type="InterPro" id="IPR004029">
    <property type="entry name" value="UreE_N"/>
</dbReference>
<dbReference type="InterPro" id="IPR036118">
    <property type="entry name" value="UreE_N_sf"/>
</dbReference>
<dbReference type="NCBIfam" id="NF009751">
    <property type="entry name" value="PRK13261.1-1"/>
    <property type="match status" value="1"/>
</dbReference>
<dbReference type="NCBIfam" id="NF009762">
    <property type="entry name" value="PRK13263.1"/>
    <property type="match status" value="1"/>
</dbReference>
<dbReference type="Pfam" id="PF05194">
    <property type="entry name" value="UreE_C"/>
    <property type="match status" value="1"/>
</dbReference>
<dbReference type="Pfam" id="PF02814">
    <property type="entry name" value="UreE_N"/>
    <property type="match status" value="1"/>
</dbReference>
<dbReference type="SMART" id="SM00988">
    <property type="entry name" value="UreE_N"/>
    <property type="match status" value="1"/>
</dbReference>
<dbReference type="SUPFAM" id="SSF69737">
    <property type="entry name" value="Urease metallochaperone UreE, C-terminal domain"/>
    <property type="match status" value="1"/>
</dbReference>
<dbReference type="SUPFAM" id="SSF69287">
    <property type="entry name" value="Urease metallochaperone UreE, N-terminal domain"/>
    <property type="match status" value="1"/>
</dbReference>
<organism>
    <name type="scientific">Burkholderia mallei (strain SAVP1)</name>
    <dbReference type="NCBI Taxonomy" id="320388"/>
    <lineage>
        <taxon>Bacteria</taxon>
        <taxon>Pseudomonadati</taxon>
        <taxon>Pseudomonadota</taxon>
        <taxon>Betaproteobacteria</taxon>
        <taxon>Burkholderiales</taxon>
        <taxon>Burkholderiaceae</taxon>
        <taxon>Burkholderia</taxon>
        <taxon>pseudomallei group</taxon>
    </lineage>
</organism>
<protein>
    <recommendedName>
        <fullName evidence="1">Urease accessory protein UreE</fullName>
    </recommendedName>
</protein>
<feature type="chain" id="PRO_1000083879" description="Urease accessory protein UreE">
    <location>
        <begin position="1"/>
        <end position="203"/>
    </location>
</feature>
<feature type="region of interest" description="Disordered" evidence="2">
    <location>
        <begin position="170"/>
        <end position="203"/>
    </location>
</feature>
<proteinExistence type="inferred from homology"/>
<evidence type="ECO:0000255" key="1">
    <source>
        <dbReference type="HAMAP-Rule" id="MF_00822"/>
    </source>
</evidence>
<evidence type="ECO:0000256" key="2">
    <source>
        <dbReference type="SAM" id="MobiDB-lite"/>
    </source>
</evidence>